<evidence type="ECO:0000255" key="1">
    <source>
        <dbReference type="HAMAP-Rule" id="MF_01172"/>
    </source>
</evidence>
<sequence length="447" mass="49259">MNAWEVNFDGLVGLTHHYAGLSFGNEASTRHCFQVSNPRLAAKQGLLKMKTLADAGFPQAVIPPHERPFIPVLRQLGFSGSDEQVLEKVARQAPHWLSSASSASPMWVANAATIAPSADTLDGKVHLTVANLNNKFHRSLEAPVTESLLKAIFNDEEKFSVHSALPQVALLGDEGAANHNRLGGHYGEPGIQLFVYGREEGNDTRPSRYPARQTREASEAVARLNQVNPQQVIFAQQNPDVIDQGVFHNDVIAVSNRQVLFCHQQAFARQSQLLANLRSRVNGFMAIEVPAAQVSVSDAVSTYLFNSQLLSRDDGSMMLVLPQECREHAGVWRYLNELLAADNPISSLKVFDLRESMANGGGPACLRLRVVLTEEERRAVNPAVMMNDTLFNALNDWVDRYYRDRLTAADLADPQLLREGREALDTLTQLLDLGSVYPFQREGGGNG</sequence>
<proteinExistence type="inferred from homology"/>
<name>ASTB_ECOL5</name>
<keyword id="KW-0056">Arginine metabolism</keyword>
<keyword id="KW-0378">Hydrolase</keyword>
<gene>
    <name evidence="1" type="primary">astB</name>
    <name type="ordered locus">ECP_1691</name>
</gene>
<comment type="function">
    <text evidence="1">Catalyzes the hydrolysis of N(2)-succinylarginine into N(2)-succinylornithine, ammonia and CO(2).</text>
</comment>
<comment type="catalytic activity">
    <reaction evidence="1">
        <text>N(2)-succinyl-L-arginine + 2 H2O + 2 H(+) = N(2)-succinyl-L-ornithine + 2 NH4(+) + CO2</text>
        <dbReference type="Rhea" id="RHEA:19533"/>
        <dbReference type="ChEBI" id="CHEBI:15377"/>
        <dbReference type="ChEBI" id="CHEBI:15378"/>
        <dbReference type="ChEBI" id="CHEBI:16526"/>
        <dbReference type="ChEBI" id="CHEBI:28938"/>
        <dbReference type="ChEBI" id="CHEBI:58241"/>
        <dbReference type="ChEBI" id="CHEBI:58514"/>
        <dbReference type="EC" id="3.5.3.23"/>
    </reaction>
</comment>
<comment type="pathway">
    <text evidence="1">Amino-acid degradation; L-arginine degradation via AST pathway; L-glutamate and succinate from L-arginine: step 2/5.</text>
</comment>
<comment type="subunit">
    <text evidence="1">Homodimer.</text>
</comment>
<comment type="similarity">
    <text evidence="1">Belongs to the succinylarginine dihydrolase family.</text>
</comment>
<feature type="chain" id="PRO_0000262352" description="N-succinylarginine dihydrolase">
    <location>
        <begin position="1"/>
        <end position="447"/>
    </location>
</feature>
<feature type="active site" evidence="1">
    <location>
        <position position="174"/>
    </location>
</feature>
<feature type="active site" evidence="1">
    <location>
        <position position="248"/>
    </location>
</feature>
<feature type="active site" description="Nucleophile" evidence="1">
    <location>
        <position position="365"/>
    </location>
</feature>
<feature type="binding site" evidence="1">
    <location>
        <begin position="19"/>
        <end position="28"/>
    </location>
    <ligand>
        <name>substrate</name>
    </ligand>
</feature>
<feature type="binding site" evidence="1">
    <location>
        <position position="110"/>
    </location>
    <ligand>
        <name>substrate</name>
    </ligand>
</feature>
<feature type="binding site" evidence="1">
    <location>
        <begin position="137"/>
        <end position="138"/>
    </location>
    <ligand>
        <name>substrate</name>
    </ligand>
</feature>
<feature type="binding site" evidence="1">
    <location>
        <position position="212"/>
    </location>
    <ligand>
        <name>substrate</name>
    </ligand>
</feature>
<feature type="binding site" evidence="1">
    <location>
        <position position="250"/>
    </location>
    <ligand>
        <name>substrate</name>
    </ligand>
</feature>
<feature type="binding site" evidence="1">
    <location>
        <position position="359"/>
    </location>
    <ligand>
        <name>substrate</name>
    </ligand>
</feature>
<dbReference type="EC" id="3.5.3.23" evidence="1"/>
<dbReference type="EMBL" id="CP000247">
    <property type="protein sequence ID" value="ABG69694.1"/>
    <property type="molecule type" value="Genomic_DNA"/>
</dbReference>
<dbReference type="RefSeq" id="WP_000994954.1">
    <property type="nucleotide sequence ID" value="NC_008253.1"/>
</dbReference>
<dbReference type="SMR" id="Q0TH85"/>
<dbReference type="KEGG" id="ecp:ECP_1691"/>
<dbReference type="HOGENOM" id="CLU_053835_0_0_6"/>
<dbReference type="UniPathway" id="UPA00185">
    <property type="reaction ID" value="UER00280"/>
</dbReference>
<dbReference type="Proteomes" id="UP000009182">
    <property type="component" value="Chromosome"/>
</dbReference>
<dbReference type="GO" id="GO:0009015">
    <property type="term" value="F:N-succinylarginine dihydrolase activity"/>
    <property type="evidence" value="ECO:0007669"/>
    <property type="project" value="UniProtKB-UniRule"/>
</dbReference>
<dbReference type="GO" id="GO:0019544">
    <property type="term" value="P:arginine catabolic process to glutamate"/>
    <property type="evidence" value="ECO:0007669"/>
    <property type="project" value="UniProtKB-UniRule"/>
</dbReference>
<dbReference type="GO" id="GO:0019545">
    <property type="term" value="P:arginine catabolic process to succinate"/>
    <property type="evidence" value="ECO:0007669"/>
    <property type="project" value="UniProtKB-UniRule"/>
</dbReference>
<dbReference type="FunFam" id="3.75.10.20:FF:000001">
    <property type="entry name" value="N-succinylarginine dihydrolase"/>
    <property type="match status" value="1"/>
</dbReference>
<dbReference type="Gene3D" id="3.75.10.20">
    <property type="entry name" value="Succinylarginine dihydrolase"/>
    <property type="match status" value="1"/>
</dbReference>
<dbReference type="HAMAP" id="MF_01172">
    <property type="entry name" value="AstB"/>
    <property type="match status" value="1"/>
</dbReference>
<dbReference type="InterPro" id="IPR037031">
    <property type="entry name" value="AstB_sf"/>
</dbReference>
<dbReference type="InterPro" id="IPR007079">
    <property type="entry name" value="SuccinylArg_d-Hdrlase_AstB"/>
</dbReference>
<dbReference type="NCBIfam" id="TIGR03241">
    <property type="entry name" value="arg_catab_astB"/>
    <property type="match status" value="1"/>
</dbReference>
<dbReference type="NCBIfam" id="NF009789">
    <property type="entry name" value="PRK13281.1"/>
    <property type="match status" value="1"/>
</dbReference>
<dbReference type="PANTHER" id="PTHR30420">
    <property type="entry name" value="N-SUCCINYLARGININE DIHYDROLASE"/>
    <property type="match status" value="1"/>
</dbReference>
<dbReference type="PANTHER" id="PTHR30420:SF2">
    <property type="entry name" value="N-SUCCINYLARGININE DIHYDROLASE"/>
    <property type="match status" value="1"/>
</dbReference>
<dbReference type="Pfam" id="PF04996">
    <property type="entry name" value="AstB"/>
    <property type="match status" value="1"/>
</dbReference>
<dbReference type="SUPFAM" id="SSF55909">
    <property type="entry name" value="Pentein"/>
    <property type="match status" value="1"/>
</dbReference>
<reference key="1">
    <citation type="journal article" date="2006" name="Mol. Microbiol.">
        <title>Role of pathogenicity island-associated integrases in the genome plasticity of uropathogenic Escherichia coli strain 536.</title>
        <authorList>
            <person name="Hochhut B."/>
            <person name="Wilde C."/>
            <person name="Balling G."/>
            <person name="Middendorf B."/>
            <person name="Dobrindt U."/>
            <person name="Brzuszkiewicz E."/>
            <person name="Gottschalk G."/>
            <person name="Carniel E."/>
            <person name="Hacker J."/>
        </authorList>
    </citation>
    <scope>NUCLEOTIDE SEQUENCE [LARGE SCALE GENOMIC DNA]</scope>
    <source>
        <strain>536 / UPEC</strain>
    </source>
</reference>
<accession>Q0TH85</accession>
<organism>
    <name type="scientific">Escherichia coli O6:K15:H31 (strain 536 / UPEC)</name>
    <dbReference type="NCBI Taxonomy" id="362663"/>
    <lineage>
        <taxon>Bacteria</taxon>
        <taxon>Pseudomonadati</taxon>
        <taxon>Pseudomonadota</taxon>
        <taxon>Gammaproteobacteria</taxon>
        <taxon>Enterobacterales</taxon>
        <taxon>Enterobacteriaceae</taxon>
        <taxon>Escherichia</taxon>
    </lineage>
</organism>
<protein>
    <recommendedName>
        <fullName evidence="1">N-succinylarginine dihydrolase</fullName>
        <ecNumber evidence="1">3.5.3.23</ecNumber>
    </recommendedName>
</protein>